<organism>
    <name type="scientific">Prochlorococcus marinus (strain MIT 9313)</name>
    <dbReference type="NCBI Taxonomy" id="74547"/>
    <lineage>
        <taxon>Bacteria</taxon>
        <taxon>Bacillati</taxon>
        <taxon>Cyanobacteriota</taxon>
        <taxon>Cyanophyceae</taxon>
        <taxon>Synechococcales</taxon>
        <taxon>Prochlorococcaceae</taxon>
        <taxon>Prochlorococcus</taxon>
    </lineage>
</organism>
<reference key="1">
    <citation type="journal article" date="2003" name="Nature">
        <title>Genome divergence in two Prochlorococcus ecotypes reflects oceanic niche differentiation.</title>
        <authorList>
            <person name="Rocap G."/>
            <person name="Larimer F.W."/>
            <person name="Lamerdin J.E."/>
            <person name="Malfatti S."/>
            <person name="Chain P."/>
            <person name="Ahlgren N.A."/>
            <person name="Arellano A."/>
            <person name="Coleman M."/>
            <person name="Hauser L."/>
            <person name="Hess W.R."/>
            <person name="Johnson Z.I."/>
            <person name="Land M.L."/>
            <person name="Lindell D."/>
            <person name="Post A.F."/>
            <person name="Regala W."/>
            <person name="Shah M."/>
            <person name="Shaw S.L."/>
            <person name="Steglich C."/>
            <person name="Sullivan M.B."/>
            <person name="Ting C.S."/>
            <person name="Tolonen A."/>
            <person name="Webb E.A."/>
            <person name="Zinser E.R."/>
            <person name="Chisholm S.W."/>
        </authorList>
    </citation>
    <scope>NUCLEOTIDE SEQUENCE [LARGE SCALE GENOMIC DNA]</scope>
    <source>
        <strain>MIT 9313</strain>
    </source>
</reference>
<accession>Q7V677</accession>
<gene>
    <name evidence="1" type="primary">hemL</name>
    <name type="ordered locus">PMT_1296</name>
</gene>
<protein>
    <recommendedName>
        <fullName evidence="1">Glutamate-1-semialdehyde 2,1-aminomutase</fullName>
        <shortName evidence="1">GSA</shortName>
        <ecNumber evidence="1">5.4.3.8</ecNumber>
    </recommendedName>
    <alternativeName>
        <fullName evidence="1">Glutamate-1-semialdehyde aminotransferase</fullName>
        <shortName evidence="1">GSA-AT</shortName>
    </alternativeName>
</protein>
<proteinExistence type="inferred from homology"/>
<evidence type="ECO:0000255" key="1">
    <source>
        <dbReference type="HAMAP-Rule" id="MF_00375"/>
    </source>
</evidence>
<sequence>MNTTRSQAIFSAAQRLMPGGVSSPVRAFRSVGGQPIVFDRVKGAYAWDVDGNRFIDYIGSWGPAICGHAHPEVIVALQDALEKGTSFGAPCELENQLAEMVIDAVPSVEMVRFVNSGTEACMSVLRLMRAFTGRDKLIKFEGCYHGHADMFLVKAGSGVATLGLPDSPGVPRSTTSNTLTAPYNDLEAVKELFAENPDAISGVILEPVVGNAGFITPEPGFLEGLRELTREHGALLVFDEVMSGFRISYGGAQARFGVTPDLTTMGKVIGGGLPVGAYGGRAEIMEMVAPAGPMYQAGTLSGNPLAMTAGIKTLELLKQEGTYERLESTTERLIKGILEAAKAAEVPITGNSIGAMFGFFLCEGPVRNFEDAKATDTELFGKLHRAMLERGIYLAPSAFEAGFTSLAHSEADIETTLKAFRESFAAVA</sequence>
<comment type="catalytic activity">
    <reaction evidence="1">
        <text>(S)-4-amino-5-oxopentanoate = 5-aminolevulinate</text>
        <dbReference type="Rhea" id="RHEA:14265"/>
        <dbReference type="ChEBI" id="CHEBI:57501"/>
        <dbReference type="ChEBI" id="CHEBI:356416"/>
        <dbReference type="EC" id="5.4.3.8"/>
    </reaction>
</comment>
<comment type="cofactor">
    <cofactor evidence="1">
        <name>pyridoxal 5'-phosphate</name>
        <dbReference type="ChEBI" id="CHEBI:597326"/>
    </cofactor>
</comment>
<comment type="pathway">
    <text evidence="1">Porphyrin-containing compound metabolism; protoporphyrin-IX biosynthesis; 5-aminolevulinate from L-glutamyl-tRNA(Glu): step 2/2.</text>
</comment>
<comment type="pathway">
    <text evidence="1">Porphyrin-containing compound metabolism; chlorophyll biosynthesis.</text>
</comment>
<comment type="subunit">
    <text evidence="1">Homodimer.</text>
</comment>
<comment type="subcellular location">
    <subcellularLocation>
        <location evidence="1">Cytoplasm</location>
    </subcellularLocation>
</comment>
<comment type="similarity">
    <text evidence="1">Belongs to the class-III pyridoxal-phosphate-dependent aminotransferase family. HemL subfamily.</text>
</comment>
<dbReference type="EC" id="5.4.3.8" evidence="1"/>
<dbReference type="EMBL" id="BX548175">
    <property type="protein sequence ID" value="CAE21471.1"/>
    <property type="molecule type" value="Genomic_DNA"/>
</dbReference>
<dbReference type="SMR" id="Q7V677"/>
<dbReference type="KEGG" id="pmt:PMT_1296"/>
<dbReference type="eggNOG" id="COG0001">
    <property type="taxonomic scope" value="Bacteria"/>
</dbReference>
<dbReference type="HOGENOM" id="CLU_016922_1_5_3"/>
<dbReference type="OrthoDB" id="9807885at2"/>
<dbReference type="UniPathway" id="UPA00251">
    <property type="reaction ID" value="UER00317"/>
</dbReference>
<dbReference type="UniPathway" id="UPA00668"/>
<dbReference type="Proteomes" id="UP000001423">
    <property type="component" value="Chromosome"/>
</dbReference>
<dbReference type="GO" id="GO:0005737">
    <property type="term" value="C:cytoplasm"/>
    <property type="evidence" value="ECO:0007669"/>
    <property type="project" value="UniProtKB-SubCell"/>
</dbReference>
<dbReference type="GO" id="GO:0042286">
    <property type="term" value="F:glutamate-1-semialdehyde 2,1-aminomutase activity"/>
    <property type="evidence" value="ECO:0007669"/>
    <property type="project" value="UniProtKB-UniRule"/>
</dbReference>
<dbReference type="GO" id="GO:0030170">
    <property type="term" value="F:pyridoxal phosphate binding"/>
    <property type="evidence" value="ECO:0007669"/>
    <property type="project" value="InterPro"/>
</dbReference>
<dbReference type="GO" id="GO:0008483">
    <property type="term" value="F:transaminase activity"/>
    <property type="evidence" value="ECO:0007669"/>
    <property type="project" value="InterPro"/>
</dbReference>
<dbReference type="GO" id="GO:0015995">
    <property type="term" value="P:chlorophyll biosynthetic process"/>
    <property type="evidence" value="ECO:0007669"/>
    <property type="project" value="UniProtKB-UniRule"/>
</dbReference>
<dbReference type="GO" id="GO:0006782">
    <property type="term" value="P:protoporphyrinogen IX biosynthetic process"/>
    <property type="evidence" value="ECO:0007669"/>
    <property type="project" value="UniProtKB-UniRule"/>
</dbReference>
<dbReference type="CDD" id="cd00610">
    <property type="entry name" value="OAT_like"/>
    <property type="match status" value="1"/>
</dbReference>
<dbReference type="FunFam" id="3.40.640.10:FF:000021">
    <property type="entry name" value="Glutamate-1-semialdehyde 2,1-aminomutase"/>
    <property type="match status" value="1"/>
</dbReference>
<dbReference type="Gene3D" id="3.90.1150.10">
    <property type="entry name" value="Aspartate Aminotransferase, domain 1"/>
    <property type="match status" value="1"/>
</dbReference>
<dbReference type="Gene3D" id="3.40.640.10">
    <property type="entry name" value="Type I PLP-dependent aspartate aminotransferase-like (Major domain)"/>
    <property type="match status" value="1"/>
</dbReference>
<dbReference type="HAMAP" id="MF_00375">
    <property type="entry name" value="HemL_aminotrans_3"/>
    <property type="match status" value="1"/>
</dbReference>
<dbReference type="InterPro" id="IPR004639">
    <property type="entry name" value="4pyrrol_synth_GluAld_NH2Trfase"/>
</dbReference>
<dbReference type="InterPro" id="IPR005814">
    <property type="entry name" value="Aminotrans_3"/>
</dbReference>
<dbReference type="InterPro" id="IPR049704">
    <property type="entry name" value="Aminotrans_3_PPA_site"/>
</dbReference>
<dbReference type="InterPro" id="IPR015424">
    <property type="entry name" value="PyrdxlP-dep_Trfase"/>
</dbReference>
<dbReference type="InterPro" id="IPR015421">
    <property type="entry name" value="PyrdxlP-dep_Trfase_major"/>
</dbReference>
<dbReference type="InterPro" id="IPR015422">
    <property type="entry name" value="PyrdxlP-dep_Trfase_small"/>
</dbReference>
<dbReference type="NCBIfam" id="TIGR00713">
    <property type="entry name" value="hemL"/>
    <property type="match status" value="1"/>
</dbReference>
<dbReference type="NCBIfam" id="NF000818">
    <property type="entry name" value="PRK00062.1"/>
    <property type="match status" value="1"/>
</dbReference>
<dbReference type="PANTHER" id="PTHR43713">
    <property type="entry name" value="GLUTAMATE-1-SEMIALDEHYDE 2,1-AMINOMUTASE"/>
    <property type="match status" value="1"/>
</dbReference>
<dbReference type="PANTHER" id="PTHR43713:SF3">
    <property type="entry name" value="GLUTAMATE-1-SEMIALDEHYDE 2,1-AMINOMUTASE 1, CHLOROPLASTIC-RELATED"/>
    <property type="match status" value="1"/>
</dbReference>
<dbReference type="Pfam" id="PF00202">
    <property type="entry name" value="Aminotran_3"/>
    <property type="match status" value="1"/>
</dbReference>
<dbReference type="SUPFAM" id="SSF53383">
    <property type="entry name" value="PLP-dependent transferases"/>
    <property type="match status" value="1"/>
</dbReference>
<dbReference type="PROSITE" id="PS00600">
    <property type="entry name" value="AA_TRANSFER_CLASS_3"/>
    <property type="match status" value="1"/>
</dbReference>
<name>GSA_PROMM</name>
<keyword id="KW-0149">Chlorophyll biosynthesis</keyword>
<keyword id="KW-0963">Cytoplasm</keyword>
<keyword id="KW-0413">Isomerase</keyword>
<keyword id="KW-0627">Porphyrin biosynthesis</keyword>
<keyword id="KW-0663">Pyridoxal phosphate</keyword>
<keyword id="KW-1185">Reference proteome</keyword>
<feature type="chain" id="PRO_0000243598" description="Glutamate-1-semialdehyde 2,1-aminomutase">
    <location>
        <begin position="1"/>
        <end position="428"/>
    </location>
</feature>
<feature type="modified residue" description="N6-(pyridoxal phosphate)lysine" evidence="1">
    <location>
        <position position="267"/>
    </location>
</feature>